<comment type="function">
    <text evidence="1">Shows three enzymatic activities that share a first common step, the attack of thiamine-PP on 2-oxoglutarate (alpha-ketoglutarate, KG), leading to the formation of an enamine-thiamine-PP intermediate upon decarboxylation. Thus, displays KGD activity, catalyzing the decarboxylation from five-carbon 2-oxoglutarate to four-carbon succinate semialdehyde (SSA). Also catalyzes C-C bond formation between the activated aldehyde formed after decarboxylation of alpha-ketoglutarate and the carbonyl of glyoxylate (GLX), to yield 2-hydroxy-3-oxoadipate (HOA), which spontaneously decarboxylates to form 5-hydroxylevulinate (HLA). And is also a component of the 2-oxoglutarate dehydrogenase (ODH) complex, that catalyzes the overall conversion of 2-oxoglutarate to succinyl-CoA and CO(2). The KG decarboxylase and KG dehydrogenase reactions provide two alternative, tightly regulated, pathways connecting the oxidative and reductive branches of the TCA cycle (By similarity).</text>
</comment>
<comment type="catalytic activity">
    <reaction>
        <text>glyoxylate + 2-oxoglutarate + H(+) = 2-hydroxy-3-oxoadipate + CO2</text>
        <dbReference type="Rhea" id="RHEA:14341"/>
        <dbReference type="ChEBI" id="CHEBI:15378"/>
        <dbReference type="ChEBI" id="CHEBI:16526"/>
        <dbReference type="ChEBI" id="CHEBI:16810"/>
        <dbReference type="ChEBI" id="CHEBI:36655"/>
        <dbReference type="ChEBI" id="CHEBI:57712"/>
        <dbReference type="EC" id="2.2.1.5"/>
    </reaction>
</comment>
<comment type="catalytic activity">
    <reaction>
        <text>2-oxoglutarate + H(+) = succinate semialdehyde + CO2</text>
        <dbReference type="Rhea" id="RHEA:10524"/>
        <dbReference type="ChEBI" id="CHEBI:15378"/>
        <dbReference type="ChEBI" id="CHEBI:16526"/>
        <dbReference type="ChEBI" id="CHEBI:16810"/>
        <dbReference type="ChEBI" id="CHEBI:57706"/>
        <dbReference type="EC" id="4.1.1.71"/>
    </reaction>
</comment>
<comment type="catalytic activity">
    <reaction>
        <text>N(6)-[(R)-lipoyl]-L-lysyl-[protein] + 2-oxoglutarate + H(+) = N(6)-[(R)-S(8)-succinyldihydrolipoyl]-L-lysyl-[protein] + CO2</text>
        <dbReference type="Rhea" id="RHEA:12188"/>
        <dbReference type="Rhea" id="RHEA-COMP:10474"/>
        <dbReference type="Rhea" id="RHEA-COMP:20092"/>
        <dbReference type="ChEBI" id="CHEBI:15378"/>
        <dbReference type="ChEBI" id="CHEBI:16526"/>
        <dbReference type="ChEBI" id="CHEBI:16810"/>
        <dbReference type="ChEBI" id="CHEBI:83099"/>
        <dbReference type="ChEBI" id="CHEBI:83120"/>
        <dbReference type="EC" id="1.2.4.2"/>
    </reaction>
</comment>
<comment type="catalytic activity">
    <reaction>
        <text>N(6)-[(R)-dihydrolipoyl]-L-lysyl-[protein] + succinyl-CoA = N(6)-[(R)-S(8)-succinyldihydrolipoyl]-L-lysyl-[protein] + CoA</text>
        <dbReference type="Rhea" id="RHEA:15213"/>
        <dbReference type="Rhea" id="RHEA-COMP:10475"/>
        <dbReference type="Rhea" id="RHEA-COMP:20092"/>
        <dbReference type="ChEBI" id="CHEBI:57287"/>
        <dbReference type="ChEBI" id="CHEBI:57292"/>
        <dbReference type="ChEBI" id="CHEBI:83100"/>
        <dbReference type="ChEBI" id="CHEBI:83120"/>
        <dbReference type="EC" id="2.3.1.61"/>
    </reaction>
</comment>
<comment type="cofactor">
    <cofactor evidence="1">
        <name>Mg(2+)</name>
        <dbReference type="ChEBI" id="CHEBI:18420"/>
    </cofactor>
</comment>
<comment type="cofactor">
    <cofactor evidence="1">
        <name>thiamine diphosphate</name>
        <dbReference type="ChEBI" id="CHEBI:58937"/>
    </cofactor>
</comment>
<comment type="activity regulation">
    <text evidence="1">Alpha-ketoglutarate dehydrogenase and decarboxylase activities are inhibited by unphosphorylated GarA, and allosterically activated by acetyl-CoA, the main substrate of the TCA cycle.</text>
</comment>
<comment type="pathway">
    <text>Carbohydrate metabolism; tricarboxylic acid cycle; succinate from 2-oxoglutarate (transferase route): step 1/2.</text>
</comment>
<comment type="pathway">
    <text>Carbohydrate metabolism; tricarboxylic acid cycle; succinyl-CoA from 2-oxoglutarate (dehydrogenase route): step 1/1.</text>
</comment>
<comment type="subunit">
    <text evidence="1">Homodimer. The 2-oxoglutarate dehydrogenase (ODH) complex contains multiple copies of three enzymatic components: 2-oxoglutarate dehydrogenase (E1), dihydrolipoamide succinyltransferase (E2) and lipoamide dehydrogenase (E3) (By similarity).</text>
</comment>
<comment type="domain">
    <text evidence="1">Is a fusion protein with two major domains exhibiting structural features of an E1 and E2 protein, and a short sequence stretch of E1 localized at the N-terminus, which is connected by a linker region to the rest of the protein.</text>
</comment>
<comment type="similarity">
    <text evidence="5">Belongs to the 2-oxoacid dehydrogenase family. Kgd subfamily.</text>
</comment>
<gene>
    <name type="primary">kgd</name>
    <name type="ordered locus">Mjls_3987</name>
</gene>
<name>KGD_MYCSJ</name>
<proteinExistence type="inferred from homology"/>
<reference key="1">
    <citation type="submission" date="2007-02" db="EMBL/GenBank/DDBJ databases">
        <title>Complete sequence of Mycobacterium sp. JLS.</title>
        <authorList>
            <consortium name="US DOE Joint Genome Institute"/>
            <person name="Copeland A."/>
            <person name="Lucas S."/>
            <person name="Lapidus A."/>
            <person name="Barry K."/>
            <person name="Detter J.C."/>
            <person name="Glavina del Rio T."/>
            <person name="Hammon N."/>
            <person name="Israni S."/>
            <person name="Dalin E."/>
            <person name="Tice H."/>
            <person name="Pitluck S."/>
            <person name="Chain P."/>
            <person name="Malfatti S."/>
            <person name="Shin M."/>
            <person name="Vergez L."/>
            <person name="Schmutz J."/>
            <person name="Larimer F."/>
            <person name="Land M."/>
            <person name="Hauser L."/>
            <person name="Kyrpides N."/>
            <person name="Mikhailova N."/>
            <person name="Miller C.D."/>
            <person name="Anderson A.J."/>
            <person name="Sims R.C."/>
            <person name="Richardson P."/>
        </authorList>
    </citation>
    <scope>NUCLEOTIDE SEQUENCE [LARGE SCALE GENOMIC DNA]</scope>
    <source>
        <strain>JLS</strain>
    </source>
</reference>
<feature type="chain" id="PRO_0000310719" description="Multifunctional 2-oxoglutarate metabolism enzyme">
    <location>
        <begin position="1"/>
        <end position="1264"/>
    </location>
</feature>
<feature type="region of interest" description="2-oxoglutarate dehydrogenase E1, N-terminal part">
    <location>
        <begin position="1"/>
        <end position="41"/>
    </location>
</feature>
<feature type="region of interest" description="Disordered" evidence="4">
    <location>
        <begin position="23"/>
        <end position="140"/>
    </location>
</feature>
<feature type="region of interest" description="Linker">
    <location>
        <begin position="42"/>
        <end position="102"/>
    </location>
</feature>
<feature type="region of interest" description="Succinyltransferase E2">
    <location>
        <begin position="103"/>
        <end position="373"/>
    </location>
</feature>
<feature type="region of interest" description="2-oxoglutarate dehydrogenase E1, C-terminal part">
    <location>
        <begin position="374"/>
        <end position="1264"/>
    </location>
</feature>
<feature type="coiled-coil region" evidence="3">
    <location>
        <begin position="819"/>
        <end position="850"/>
    </location>
</feature>
<feature type="compositionally biased region" description="Basic and acidic residues" evidence="4">
    <location>
        <begin position="23"/>
        <end position="37"/>
    </location>
</feature>
<feature type="compositionally biased region" description="Polar residues" evidence="4">
    <location>
        <begin position="43"/>
        <end position="59"/>
    </location>
</feature>
<feature type="compositionally biased region" description="Pro residues" evidence="4">
    <location>
        <begin position="63"/>
        <end position="73"/>
    </location>
</feature>
<feature type="active site" description="Proton acceptor; for succinyltransferase activity" evidence="1">
    <location>
        <position position="352"/>
    </location>
</feature>
<feature type="binding site" evidence="2">
    <location>
        <position position="578"/>
    </location>
    <ligand>
        <name>thiamine diphosphate</name>
        <dbReference type="ChEBI" id="CHEBI:58937"/>
    </ligand>
</feature>
<feature type="binding site" evidence="2">
    <location>
        <position position="617"/>
    </location>
    <ligand>
        <name>2-oxoglutarate</name>
        <dbReference type="ChEBI" id="CHEBI:16810"/>
    </ligand>
</feature>
<feature type="binding site" evidence="2">
    <location>
        <position position="642"/>
    </location>
    <ligand>
        <name>2-oxoglutarate</name>
        <dbReference type="ChEBI" id="CHEBI:16810"/>
    </ligand>
</feature>
<feature type="binding site" evidence="2">
    <location>
        <position position="642"/>
    </location>
    <ligand>
        <name>thiamine diphosphate</name>
        <dbReference type="ChEBI" id="CHEBI:58937"/>
    </ligand>
</feature>
<feature type="binding site" evidence="2">
    <location>
        <position position="644"/>
    </location>
    <ligand>
        <name>thiamine diphosphate</name>
        <dbReference type="ChEBI" id="CHEBI:58937"/>
    </ligand>
</feature>
<feature type="binding site" evidence="2">
    <location>
        <position position="681"/>
    </location>
    <ligand>
        <name>Mg(2+)</name>
        <dbReference type="ChEBI" id="CHEBI:18420"/>
    </ligand>
</feature>
<feature type="binding site" evidence="2">
    <location>
        <position position="681"/>
    </location>
    <ligand>
        <name>thiamine diphosphate</name>
        <dbReference type="ChEBI" id="CHEBI:58937"/>
    </ligand>
</feature>
<feature type="binding site" evidence="2">
    <location>
        <position position="682"/>
    </location>
    <ligand>
        <name>thiamine diphosphate</name>
        <dbReference type="ChEBI" id="CHEBI:58937"/>
    </ligand>
</feature>
<feature type="binding site" evidence="2">
    <location>
        <position position="683"/>
    </location>
    <ligand>
        <name>thiamine diphosphate</name>
        <dbReference type="ChEBI" id="CHEBI:58937"/>
    </ligand>
</feature>
<feature type="binding site" evidence="2">
    <location>
        <position position="714"/>
    </location>
    <ligand>
        <name>Mg(2+)</name>
        <dbReference type="ChEBI" id="CHEBI:18420"/>
    </ligand>
</feature>
<feature type="binding site" evidence="2">
    <location>
        <position position="714"/>
    </location>
    <ligand>
        <name>thiamine diphosphate</name>
        <dbReference type="ChEBI" id="CHEBI:58937"/>
    </ligand>
</feature>
<feature type="binding site" evidence="2">
    <location>
        <position position="716"/>
    </location>
    <ligand>
        <name>Mg(2+)</name>
        <dbReference type="ChEBI" id="CHEBI:18420"/>
    </ligand>
</feature>
<feature type="binding site" evidence="2">
    <location>
        <position position="1056"/>
    </location>
    <ligand>
        <name>2-oxoglutarate</name>
        <dbReference type="ChEBI" id="CHEBI:16810"/>
    </ligand>
</feature>
<feature type="binding site" evidence="2">
    <location>
        <position position="1074"/>
    </location>
    <ligand>
        <name>acetyl-CoA</name>
        <dbReference type="ChEBI" id="CHEBI:57288"/>
        <note>allosteric activator</note>
    </ligand>
</feature>
<feature type="binding site" evidence="2">
    <location>
        <position position="1090"/>
    </location>
    <ligand>
        <name>acetyl-CoA</name>
        <dbReference type="ChEBI" id="CHEBI:57288"/>
        <note>allosteric activator</note>
    </ligand>
</feature>
<feature type="binding site" evidence="2">
    <location>
        <position position="1125"/>
    </location>
    <ligand>
        <name>acetyl-CoA</name>
        <dbReference type="ChEBI" id="CHEBI:57288"/>
        <note>allosteric activator</note>
    </ligand>
</feature>
<feature type="binding site" evidence="2">
    <location>
        <position position="1128"/>
    </location>
    <ligand>
        <name>acetyl-CoA</name>
        <dbReference type="ChEBI" id="CHEBI:57288"/>
        <note>allosteric activator</note>
    </ligand>
</feature>
<feature type="binding site" evidence="2">
    <location>
        <position position="1178"/>
    </location>
    <ligand>
        <name>acetyl-CoA</name>
        <dbReference type="ChEBI" id="CHEBI:57288"/>
        <note>allosteric activator</note>
    </ligand>
</feature>
<feature type="binding site" evidence="2">
    <location>
        <position position="1185"/>
    </location>
    <ligand>
        <name>acetyl-CoA</name>
        <dbReference type="ChEBI" id="CHEBI:57288"/>
        <note>allosteric activator</note>
    </ligand>
</feature>
<feature type="binding site" evidence="2">
    <location>
        <position position="1186"/>
    </location>
    <ligand>
        <name>acetyl-CoA</name>
        <dbReference type="ChEBI" id="CHEBI:57288"/>
        <note>allosteric activator</note>
    </ligand>
</feature>
<dbReference type="EC" id="2.2.1.5"/>
<dbReference type="EC" id="4.1.1.71"/>
<dbReference type="EC" id="1.2.4.2"/>
<dbReference type="EC" id="2.3.1.61"/>
<dbReference type="EMBL" id="CP000580">
    <property type="protein sequence ID" value="ABN99762.1"/>
    <property type="molecule type" value="Genomic_DNA"/>
</dbReference>
<dbReference type="SMR" id="A3Q3N5"/>
<dbReference type="KEGG" id="mjl:Mjls_3987"/>
<dbReference type="HOGENOM" id="CLU_004709_1_0_11"/>
<dbReference type="BioCyc" id="MSP164757:G1G8C-4028-MONOMER"/>
<dbReference type="UniPathway" id="UPA00223">
    <property type="reaction ID" value="UER00997"/>
</dbReference>
<dbReference type="UniPathway" id="UPA00223">
    <property type="reaction ID" value="UER01001"/>
</dbReference>
<dbReference type="GO" id="GO:0005829">
    <property type="term" value="C:cytosol"/>
    <property type="evidence" value="ECO:0007669"/>
    <property type="project" value="TreeGrafter"/>
</dbReference>
<dbReference type="GO" id="GO:0045252">
    <property type="term" value="C:oxoglutarate dehydrogenase complex"/>
    <property type="evidence" value="ECO:0007669"/>
    <property type="project" value="TreeGrafter"/>
</dbReference>
<dbReference type="GO" id="GO:0050439">
    <property type="term" value="F:2-hydroxy-3-oxoadipate synthase activity"/>
    <property type="evidence" value="ECO:0007669"/>
    <property type="project" value="UniProtKB-EC"/>
</dbReference>
<dbReference type="GO" id="GO:0008683">
    <property type="term" value="F:2-oxoglutarate decarboxylase activity"/>
    <property type="evidence" value="ECO:0007669"/>
    <property type="project" value="UniProtKB-EC"/>
</dbReference>
<dbReference type="GO" id="GO:0004149">
    <property type="term" value="F:dihydrolipoyllysine-residue succinyltransferase activity"/>
    <property type="evidence" value="ECO:0007669"/>
    <property type="project" value="UniProtKB-EC"/>
</dbReference>
<dbReference type="GO" id="GO:0000287">
    <property type="term" value="F:magnesium ion binding"/>
    <property type="evidence" value="ECO:0007669"/>
    <property type="project" value="UniProtKB-ARBA"/>
</dbReference>
<dbReference type="GO" id="GO:0004591">
    <property type="term" value="F:oxoglutarate dehydrogenase (succinyl-transferring) activity"/>
    <property type="evidence" value="ECO:0007669"/>
    <property type="project" value="UniProtKB-EC"/>
</dbReference>
<dbReference type="GO" id="GO:0030976">
    <property type="term" value="F:thiamine pyrophosphate binding"/>
    <property type="evidence" value="ECO:0007669"/>
    <property type="project" value="InterPro"/>
</dbReference>
<dbReference type="GO" id="GO:0006099">
    <property type="term" value="P:tricarboxylic acid cycle"/>
    <property type="evidence" value="ECO:0007669"/>
    <property type="project" value="UniProtKB-UniPathway"/>
</dbReference>
<dbReference type="CDD" id="cd02016">
    <property type="entry name" value="TPP_E1_OGDC_like"/>
    <property type="match status" value="1"/>
</dbReference>
<dbReference type="FunFam" id="3.40.50.11610:FF:000002">
    <property type="entry name" value="2-oxoglutarate dehydrogenase E1 component"/>
    <property type="match status" value="1"/>
</dbReference>
<dbReference type="FunFam" id="3.40.50.970:FF:000018">
    <property type="entry name" value="2-oxoglutarate dehydrogenase E1 component"/>
    <property type="match status" value="1"/>
</dbReference>
<dbReference type="Gene3D" id="3.40.50.12470">
    <property type="match status" value="1"/>
</dbReference>
<dbReference type="Gene3D" id="3.40.50.970">
    <property type="match status" value="1"/>
</dbReference>
<dbReference type="Gene3D" id="3.30.559.10">
    <property type="entry name" value="Chloramphenicol acetyltransferase-like domain"/>
    <property type="match status" value="1"/>
</dbReference>
<dbReference type="Gene3D" id="3.40.50.11610">
    <property type="entry name" value="Multifunctional 2-oxoglutarate metabolism enzyme, C-terminal domain"/>
    <property type="match status" value="1"/>
</dbReference>
<dbReference type="Gene3D" id="1.10.287.1150">
    <property type="entry name" value="TPP helical domain"/>
    <property type="match status" value="1"/>
</dbReference>
<dbReference type="InterPro" id="IPR001078">
    <property type="entry name" value="2-oxoacid_DH_actylTfrase"/>
</dbReference>
<dbReference type="InterPro" id="IPR032106">
    <property type="entry name" value="2-oxogl_dehyd_N"/>
</dbReference>
<dbReference type="InterPro" id="IPR011603">
    <property type="entry name" value="2oxoglutarate_DH_E1"/>
</dbReference>
<dbReference type="InterPro" id="IPR023213">
    <property type="entry name" value="CAT-like_dom_sf"/>
</dbReference>
<dbReference type="InterPro" id="IPR001017">
    <property type="entry name" value="DH_E1"/>
</dbReference>
<dbReference type="InterPro" id="IPR042179">
    <property type="entry name" value="KGD_C_sf"/>
</dbReference>
<dbReference type="InterPro" id="IPR031717">
    <property type="entry name" value="ODO-1/KGD_C"/>
</dbReference>
<dbReference type="InterPro" id="IPR029061">
    <property type="entry name" value="THDP-binding"/>
</dbReference>
<dbReference type="InterPro" id="IPR005475">
    <property type="entry name" value="Transketolase-like_Pyr-bd"/>
</dbReference>
<dbReference type="NCBIfam" id="TIGR00239">
    <property type="entry name" value="2oxo_dh_E1"/>
    <property type="match status" value="1"/>
</dbReference>
<dbReference type="NCBIfam" id="NF006914">
    <property type="entry name" value="PRK09404.1"/>
    <property type="match status" value="1"/>
</dbReference>
<dbReference type="NCBIfam" id="NF008907">
    <property type="entry name" value="PRK12270.1"/>
    <property type="match status" value="1"/>
</dbReference>
<dbReference type="PANTHER" id="PTHR23152:SF4">
    <property type="entry name" value="2-OXOADIPATE DEHYDROGENASE COMPLEX COMPONENT E1"/>
    <property type="match status" value="1"/>
</dbReference>
<dbReference type="PANTHER" id="PTHR23152">
    <property type="entry name" value="2-OXOGLUTARATE DEHYDROGENASE"/>
    <property type="match status" value="1"/>
</dbReference>
<dbReference type="Pfam" id="PF00198">
    <property type="entry name" value="2-oxoacid_dh"/>
    <property type="match status" value="1"/>
</dbReference>
<dbReference type="Pfam" id="PF16078">
    <property type="entry name" value="2-oxogl_dehyd_N"/>
    <property type="match status" value="1"/>
</dbReference>
<dbReference type="Pfam" id="PF00676">
    <property type="entry name" value="E1_dh"/>
    <property type="match status" value="1"/>
</dbReference>
<dbReference type="Pfam" id="PF16870">
    <property type="entry name" value="OxoGdeHyase_C"/>
    <property type="match status" value="1"/>
</dbReference>
<dbReference type="Pfam" id="PF02779">
    <property type="entry name" value="Transket_pyr"/>
    <property type="match status" value="1"/>
</dbReference>
<dbReference type="PIRSF" id="PIRSF000157">
    <property type="entry name" value="Oxoglu_dh_E1"/>
    <property type="match status" value="1"/>
</dbReference>
<dbReference type="SMART" id="SM00861">
    <property type="entry name" value="Transket_pyr"/>
    <property type="match status" value="1"/>
</dbReference>
<dbReference type="SUPFAM" id="SSF52777">
    <property type="entry name" value="CoA-dependent acyltransferases"/>
    <property type="match status" value="1"/>
</dbReference>
<dbReference type="SUPFAM" id="SSF52518">
    <property type="entry name" value="Thiamin diphosphate-binding fold (THDP-binding)"/>
    <property type="match status" value="2"/>
</dbReference>
<sequence>MSSSPSPFGQNEWLVEEMYRKFREDPSSVDPSWHEFLVDYNPEPTTDSSASENGQQTRTAAPKAPPEPAPAPAPKSQDSKSQAPKQDSKPQESKPQAKAKPAESKSSTKPADAKSEKSGKSGTNGAAKPAAQPADDSDQNQVLRGAAAAVAKNMSASLDVPTATSVRAIPAKLMIDNRVVINNHLKRTRGGKISFTHLIGYAIVAAVKKFPNMNRHFAEVDGKPNAVTPAHTNLGLAIDLQGKDGNRQLVVAAIKKADTMRFGQFIAAYEDIVRRARDGKLTAEDFSGVTISLTNPGTIGTVHSVPRLMRGQGAIIGVGAMEYPAEFQGASEERIADLGIGKLITLTSTYDHRIIQGAESGDFLRTVHQLLLSDDFFDEIFRELGIPYEPVRWRTDNPDSIEDKNARVIELIAAYRNRGHLMADIDPLRLDSNRFRSHPDLDVLTHGLTLWDLDREFKVNGFAGAERKKLRDVLAVLRDAYCRHIGVEYTHILEPEQQQWLQERIEGKHEKPTVAQQKYILSRLNAAEAFETFLQTKYVGQKRFSLEGAETVIPAMDAVIDQCAEHALDEVVIGMPHRGRLNVLANIVGKPYSQIFSEFEGNLNPSQAHGSGDVKYHLGSSGTYLQMFGDNDITVSLTANPSHLEAVDPVMEGLVRAKQDLLDKGDTEDGYTVVPLMLHGDAAFAGQGVVAETLNLALLRGYRTGGTIHLIVNNQIGFTTSPAAAKSSEYCTDVAKMIGAPIFHVNGDDPEAAVWVSRLAVDFRQKFKKDVVIDLLCYRRRGHNEGDDPSMTQPSMYDVIDTKRGVRKSYTEALIGRGDISMKEAEDALRDYQGQLEQVFNEVRELEKHEIEPSESVEADQQIPAKLATAVDKSLLARIGDAHLAVPEGFTVHPRVKPVLEKRREMAYEGKVDWAFAELLALGTMISEGKLVRLSGQDTRRGTFTQRHSVVIDRKTGKEFTPLQLLATDSDGNPTGGKFLVYDSPLSEFAAVGFEYGYSVGNPDAMVLWEAQFGDFINGAQSIIDEFISSGEAKWGQLSDVVLLLPHGHEGQGPDHTSGRIERFLQLWAEGSMTIALPSTPANYFHLLRRHSLDGIQRPLIVFTPKSMLRNKAAVSDIRDFTEQKFRSVLEEPTYTDGDGDRNKVTRILLTSGKIYYELVARKNKESRDDVAIVRIEQLAPLPKRRLAETLDKYPNVDEKFWVQEEPANQGAWPTFGLTLPEMLPDHFTGIKRISRRAMSAPSSGSSKVHAVEQQEILDEAFAP</sequence>
<organism>
    <name type="scientific">Mycobacterium sp. (strain JLS)</name>
    <dbReference type="NCBI Taxonomy" id="164757"/>
    <lineage>
        <taxon>Bacteria</taxon>
        <taxon>Bacillati</taxon>
        <taxon>Actinomycetota</taxon>
        <taxon>Actinomycetes</taxon>
        <taxon>Mycobacteriales</taxon>
        <taxon>Mycobacteriaceae</taxon>
        <taxon>Mycobacterium</taxon>
    </lineage>
</organism>
<accession>A3Q3N5</accession>
<protein>
    <recommendedName>
        <fullName>Multifunctional 2-oxoglutarate metabolism enzyme</fullName>
    </recommendedName>
    <alternativeName>
        <fullName>2-hydroxy-3-oxoadipate synthase</fullName>
        <shortName>HOA synthase</shortName>
        <shortName>HOAS</shortName>
        <ecNumber>2.2.1.5</ecNumber>
    </alternativeName>
    <alternativeName>
        <fullName>2-oxoglutarate carboxy-lyase</fullName>
    </alternativeName>
    <alternativeName>
        <fullName>2-oxoglutarate decarboxylase</fullName>
    </alternativeName>
    <alternativeName>
        <fullName>Alpha-ketoglutarate decarboxylase</fullName>
        <shortName>KG decarboxylase</shortName>
        <shortName>KGD</shortName>
        <ecNumber>4.1.1.71</ecNumber>
    </alternativeName>
    <alternativeName>
        <fullName>Alpha-ketoglutarate-glyoxylate carboligase</fullName>
    </alternativeName>
    <domain>
        <recommendedName>
            <fullName>2-oxoglutarate dehydrogenase E1 component</fullName>
            <shortName>ODH E1 component</shortName>
            <ecNumber>1.2.4.2</ecNumber>
        </recommendedName>
        <alternativeName>
            <fullName>Alpha-ketoglutarate dehydrogenase E1 component</fullName>
            <shortName>KDH E1 component</shortName>
        </alternativeName>
    </domain>
    <domain>
        <recommendedName>
            <fullName>Dihydrolipoyllysine-residue succinyltransferase component of 2-oxoglutarate dehydrogenase complex</fullName>
            <ecNumber>2.3.1.61</ecNumber>
        </recommendedName>
        <alternativeName>
            <fullName>2-oxoglutarate dehydrogenase complex E2 component</fullName>
            <shortName>ODH E2 component</shortName>
            <shortName>OGDC-E2</shortName>
        </alternativeName>
        <alternativeName>
            <fullName>Dihydrolipoamide succinyltransferase</fullName>
        </alternativeName>
    </domain>
</protein>
<evidence type="ECO:0000250" key="1"/>
<evidence type="ECO:0000250" key="2">
    <source>
        <dbReference type="UniProtKB" id="A0R2B1"/>
    </source>
</evidence>
<evidence type="ECO:0000255" key="3"/>
<evidence type="ECO:0000256" key="4">
    <source>
        <dbReference type="SAM" id="MobiDB-lite"/>
    </source>
</evidence>
<evidence type="ECO:0000305" key="5"/>
<keyword id="KW-0012">Acyltransferase</keyword>
<keyword id="KW-0021">Allosteric enzyme</keyword>
<keyword id="KW-0175">Coiled coil</keyword>
<keyword id="KW-0210">Decarboxylase</keyword>
<keyword id="KW-0456">Lyase</keyword>
<keyword id="KW-0460">Magnesium</keyword>
<keyword id="KW-0479">Metal-binding</keyword>
<keyword id="KW-0511">Multifunctional enzyme</keyword>
<keyword id="KW-0560">Oxidoreductase</keyword>
<keyword id="KW-0786">Thiamine pyrophosphate</keyword>
<keyword id="KW-0808">Transferase</keyword>
<keyword id="KW-0816">Tricarboxylic acid cycle</keyword>